<dbReference type="EC" id="7.-.-.-" evidence="1"/>
<dbReference type="EMBL" id="CP000243">
    <property type="protein sequence ID" value="ABE07298.1"/>
    <property type="molecule type" value="Genomic_DNA"/>
</dbReference>
<dbReference type="RefSeq" id="WP_000231939.1">
    <property type="nucleotide sequence ID" value="NZ_CP064825.1"/>
</dbReference>
<dbReference type="SMR" id="Q1RBG6"/>
<dbReference type="KEGG" id="eci:UTI89_C1820"/>
<dbReference type="HOGENOM" id="CLU_042020_0_0_6"/>
<dbReference type="Proteomes" id="UP000001952">
    <property type="component" value="Chromosome"/>
</dbReference>
<dbReference type="GO" id="GO:0005886">
    <property type="term" value="C:plasma membrane"/>
    <property type="evidence" value="ECO:0007669"/>
    <property type="project" value="UniProtKB-SubCell"/>
</dbReference>
<dbReference type="GO" id="GO:0022900">
    <property type="term" value="P:electron transport chain"/>
    <property type="evidence" value="ECO:0007669"/>
    <property type="project" value="UniProtKB-UniRule"/>
</dbReference>
<dbReference type="GO" id="GO:0055085">
    <property type="term" value="P:transmembrane transport"/>
    <property type="evidence" value="ECO:0007669"/>
    <property type="project" value="InterPro"/>
</dbReference>
<dbReference type="HAMAP" id="MF_00462">
    <property type="entry name" value="RsxD_RnfD"/>
    <property type="match status" value="1"/>
</dbReference>
<dbReference type="InterPro" id="IPR004338">
    <property type="entry name" value="NqrB/RnfD"/>
</dbReference>
<dbReference type="InterPro" id="IPR011303">
    <property type="entry name" value="RnfD_bac"/>
</dbReference>
<dbReference type="NCBIfam" id="NF002011">
    <property type="entry name" value="PRK00816.1"/>
    <property type="match status" value="1"/>
</dbReference>
<dbReference type="NCBIfam" id="TIGR01946">
    <property type="entry name" value="rnfD"/>
    <property type="match status" value="1"/>
</dbReference>
<dbReference type="PANTHER" id="PTHR30578">
    <property type="entry name" value="ELECTRON TRANSPORT COMPLEX PROTEIN RNFD"/>
    <property type="match status" value="1"/>
</dbReference>
<dbReference type="PANTHER" id="PTHR30578:SF0">
    <property type="entry name" value="ION-TRANSLOCATING OXIDOREDUCTASE COMPLEX SUBUNIT D"/>
    <property type="match status" value="1"/>
</dbReference>
<dbReference type="Pfam" id="PF03116">
    <property type="entry name" value="NQR2_RnfD_RnfE"/>
    <property type="match status" value="1"/>
</dbReference>
<keyword id="KW-0997">Cell inner membrane</keyword>
<keyword id="KW-1003">Cell membrane</keyword>
<keyword id="KW-0249">Electron transport</keyword>
<keyword id="KW-0285">Flavoprotein</keyword>
<keyword id="KW-0288">FMN</keyword>
<keyword id="KW-0472">Membrane</keyword>
<keyword id="KW-0597">Phosphoprotein</keyword>
<keyword id="KW-1278">Translocase</keyword>
<keyword id="KW-0812">Transmembrane</keyword>
<keyword id="KW-1133">Transmembrane helix</keyword>
<keyword id="KW-0813">Transport</keyword>
<reference key="1">
    <citation type="journal article" date="2006" name="Proc. Natl. Acad. Sci. U.S.A.">
        <title>Identification of genes subject to positive selection in uropathogenic strains of Escherichia coli: a comparative genomics approach.</title>
        <authorList>
            <person name="Chen S.L."/>
            <person name="Hung C.-S."/>
            <person name="Xu J."/>
            <person name="Reigstad C.S."/>
            <person name="Magrini V."/>
            <person name="Sabo A."/>
            <person name="Blasiar D."/>
            <person name="Bieri T."/>
            <person name="Meyer R.R."/>
            <person name="Ozersky P."/>
            <person name="Armstrong J.R."/>
            <person name="Fulton R.S."/>
            <person name="Latreille J.P."/>
            <person name="Spieth J."/>
            <person name="Hooton T.M."/>
            <person name="Mardis E.R."/>
            <person name="Hultgren S.J."/>
            <person name="Gordon J.I."/>
        </authorList>
    </citation>
    <scope>NUCLEOTIDE SEQUENCE [LARGE SCALE GENOMIC DNA]</scope>
    <source>
        <strain>UTI89 / UPEC</strain>
    </source>
</reference>
<organism>
    <name type="scientific">Escherichia coli (strain UTI89 / UPEC)</name>
    <dbReference type="NCBI Taxonomy" id="364106"/>
    <lineage>
        <taxon>Bacteria</taxon>
        <taxon>Pseudomonadati</taxon>
        <taxon>Pseudomonadota</taxon>
        <taxon>Gammaproteobacteria</taxon>
        <taxon>Enterobacterales</taxon>
        <taxon>Enterobacteriaceae</taxon>
        <taxon>Escherichia</taxon>
    </lineage>
</organism>
<feature type="chain" id="PRO_0000298228" description="Ion-translocating oxidoreductase complex subunit D">
    <location>
        <begin position="1"/>
        <end position="352"/>
    </location>
</feature>
<feature type="transmembrane region" description="Helical" evidence="1">
    <location>
        <begin position="20"/>
        <end position="40"/>
    </location>
</feature>
<feature type="transmembrane region" description="Helical" evidence="1">
    <location>
        <begin position="42"/>
        <end position="62"/>
    </location>
</feature>
<feature type="transmembrane region" description="Helical" evidence="1">
    <location>
        <begin position="89"/>
        <end position="109"/>
    </location>
</feature>
<feature type="transmembrane region" description="Helical" evidence="1">
    <location>
        <begin position="123"/>
        <end position="143"/>
    </location>
</feature>
<feature type="transmembrane region" description="Helical" evidence="1">
    <location>
        <begin position="214"/>
        <end position="234"/>
    </location>
</feature>
<feature type="transmembrane region" description="Helical" evidence="1">
    <location>
        <begin position="242"/>
        <end position="262"/>
    </location>
</feature>
<feature type="transmembrane region" description="Helical" evidence="1">
    <location>
        <begin position="267"/>
        <end position="287"/>
    </location>
</feature>
<feature type="transmembrane region" description="Helical" evidence="1">
    <location>
        <begin position="301"/>
        <end position="321"/>
    </location>
</feature>
<feature type="transmembrane region" description="Helical" evidence="1">
    <location>
        <begin position="322"/>
        <end position="342"/>
    </location>
</feature>
<feature type="modified residue" description="FMN phosphoryl threonine" evidence="1">
    <location>
        <position position="187"/>
    </location>
</feature>
<gene>
    <name evidence="1" type="primary">rsxD</name>
    <name type="ordered locus">UTI89_C1820</name>
</gene>
<name>RSXD_ECOUT</name>
<protein>
    <recommendedName>
        <fullName evidence="1">Ion-translocating oxidoreductase complex subunit D</fullName>
        <ecNumber evidence="1">7.-.-.-</ecNumber>
    </recommendedName>
    <alternativeName>
        <fullName evidence="1">Rsx electron transport complex subunit D</fullName>
    </alternativeName>
</protein>
<evidence type="ECO:0000255" key="1">
    <source>
        <dbReference type="HAMAP-Rule" id="MF_00462"/>
    </source>
</evidence>
<sequence>MVFRIASSPYTHNQRQTSRIMLLVLLAAVPGIAAQLWFFGWGTLVQILLASVSALLAEALVLKLRKQSVAATLKDNSALLTGLLLAVSIPPLAPWWMVVLGTVFAVIIAKQLYGGLGQNPFNPAMIGYVVLLISFPVQMTSWLPPHEIAVNIPGFIDAIQVIFSGHTTSGGDMNTLRLGIDGISQATPLDTFKTSVRAGHSVEEIMQYPIYSGILAGAGWQWVNLAWLAGGVWLLWQKAIRWHVPLSFLVTLALCATLGWLFSPDTLAAPQIHLLSGATMLGAFFILTDPVTASTTNRGRLIFGALAGLLVWMIRSFGGYPDGVAFAVLLANITVPLIDYYTRPRVYGHRKG</sequence>
<comment type="function">
    <text evidence="1">Part of a membrane-bound complex that couples electron transfer with translocation of ions across the membrane. Required to maintain the reduced state of SoxR.</text>
</comment>
<comment type="cofactor">
    <cofactor evidence="1">
        <name>FMN</name>
        <dbReference type="ChEBI" id="CHEBI:58210"/>
    </cofactor>
</comment>
<comment type="subunit">
    <text evidence="1">The complex is composed of six subunits: RsxA, RsxB, RsxC, RsxD, RsxE and RsxG.</text>
</comment>
<comment type="subcellular location">
    <subcellularLocation>
        <location evidence="1">Cell inner membrane</location>
        <topology evidence="1">Multi-pass membrane protein</topology>
    </subcellularLocation>
</comment>
<comment type="similarity">
    <text evidence="1">Belongs to the NqrB/RnfD family.</text>
</comment>
<proteinExistence type="inferred from homology"/>
<accession>Q1RBG6</accession>